<proteinExistence type="inferred from homology"/>
<keyword id="KW-0378">Hydrolase</keyword>
<keyword id="KW-0479">Metal-binding</keyword>
<keyword id="KW-0482">Metalloprotease</keyword>
<keyword id="KW-0496">Mitochondrion</keyword>
<keyword id="KW-0645">Protease</keyword>
<keyword id="KW-1185">Reference proteome</keyword>
<keyword id="KW-0809">Transit peptide</keyword>
<keyword id="KW-0862">Zinc</keyword>
<gene>
    <name type="primary">cym1</name>
    <name type="ORF">SPBC119.17</name>
</gene>
<name>PREP_SCHPO</name>
<organism>
    <name type="scientific">Schizosaccharomyces pombe (strain 972 / ATCC 24843)</name>
    <name type="common">Fission yeast</name>
    <dbReference type="NCBI Taxonomy" id="284812"/>
    <lineage>
        <taxon>Eukaryota</taxon>
        <taxon>Fungi</taxon>
        <taxon>Dikarya</taxon>
        <taxon>Ascomycota</taxon>
        <taxon>Taphrinomycotina</taxon>
        <taxon>Schizosaccharomycetes</taxon>
        <taxon>Schizosaccharomycetales</taxon>
        <taxon>Schizosaccharomycetaceae</taxon>
        <taxon>Schizosaccharomyces</taxon>
    </lineage>
</organism>
<evidence type="ECO:0000250" key="1">
    <source>
        <dbReference type="UniProtKB" id="A0A8H8UNX0"/>
    </source>
</evidence>
<evidence type="ECO:0000250" key="2">
    <source>
        <dbReference type="UniProtKB" id="P32898"/>
    </source>
</evidence>
<evidence type="ECO:0000250" key="3">
    <source>
        <dbReference type="UniProtKB" id="Q5JRX3"/>
    </source>
</evidence>
<evidence type="ECO:0000250" key="4">
    <source>
        <dbReference type="UniProtKB" id="Q9LJL3"/>
    </source>
</evidence>
<evidence type="ECO:0000255" key="5"/>
<evidence type="ECO:0000305" key="6"/>
<protein>
    <recommendedName>
        <fullName>Presequence protease, mitochondrial</fullName>
        <shortName>PreP</shortName>
        <ecNumber evidence="2">3.4.24.-</ecNumber>
    </recommendedName>
    <alternativeName>
        <fullName>Pitrilysin metalloproteinase</fullName>
    </alternativeName>
</protein>
<sequence length="992" mass="111406">MNYAKLSIAFSKKTIKTHNCRLFQRWLHVGDKVHDFRVVDTKKVPELQLNYTRLKHEPTNADMIHLDREDPNSVFSIGFQTPAENDEGIPHILEHTTLCGSNKYPVRDPFFKMLNRSLATFMNAFTASDFTFYPFATVNTTDYKNLRDVYLDATLFPKLRKLDFLQEGWRFEHADVNDKKSPIIFNGVVYNEMKGQVSDSSYIFYMLFQQHLFQGTAYGFNSGGDPLAIPDLKYEELVKFHRSHYHPSNAKILSYGSFPLEDNLSALSETFRPFSKRELNLPNTFLKEFDQEKRVVEYGPLDPVMAPGRQVKTSISFLANDTSNVYETFALKVLSKLCFDGFSSPFYKALIESGLGTDFAPNSGYDSTTKRGIFSVGLEGASEESLAKIENLVYSIFNDLALKGFENEKLEAILHQMEISLKHKSAHFGIGLAQSLPFNWFNGADPADWLSFNKQIEWLKQKNSDGKLFQKLIKKYILENKSRFVFTMLPSSTFPQRLQEAEAKKLQERTSKLTDEDIAEIEKTSVKLLEAQSTPADTSCLPTLSVSDIPETIDETKLKFLDIAGMKAQWYDLAAGLTYIRLLLPLKNFPESLIPYLPVYCDACLNLGTHSESIGDLEHQIRRYTGGISISPSAVTNNSDVSKYELGIAISGYALDKNVGKLVELINKAFWNTNLSNTDKLAIMLKTSVSGITDGIAEKGHSFAKVSSASGLTEKTSITEQLGGLTQVKLLSQLSREESFGPLVEKLTAIREILRGTSGFKAAINASPTQHEVVEKALQKFMKSRGVNQQTQTKSTSKERNGINSIKTYHELPFQTYFAAKSCLGVPYTHPDGAPLQILSSLLTHKYLHGEIREKGGAYGAGLSYSGIDGVLSFFTYRDSDPIRSLSVFDEASEWATTHEFSQRDIDEAKLAVFQGIDSPVSESQKGMLYFVDGVTDEMLQNRRKQLLNVSANDLKAVAKKYLVNPKKSYTAVLGPKSEKQLPTWVIDKFES</sequence>
<dbReference type="EC" id="3.4.24.-" evidence="2"/>
<dbReference type="EMBL" id="CU329671">
    <property type="protein sequence ID" value="CAA17932.4"/>
    <property type="molecule type" value="Genomic_DNA"/>
</dbReference>
<dbReference type="PIR" id="T39315">
    <property type="entry name" value="T39315"/>
</dbReference>
<dbReference type="RefSeq" id="NP_595299.2">
    <property type="nucleotide sequence ID" value="NM_001021206.3"/>
</dbReference>
<dbReference type="SMR" id="O42908"/>
<dbReference type="FunCoup" id="O42908">
    <property type="interactions" value="340"/>
</dbReference>
<dbReference type="STRING" id="284812.O42908"/>
<dbReference type="MEROPS" id="M16.A19"/>
<dbReference type="iPTMnet" id="O42908"/>
<dbReference type="PaxDb" id="4896-SPBC119.17.1"/>
<dbReference type="EnsemblFungi" id="SPBC119.17.1">
    <property type="protein sequence ID" value="SPBC119.17.1:pep"/>
    <property type="gene ID" value="SPBC119.17"/>
</dbReference>
<dbReference type="GeneID" id="2540111"/>
<dbReference type="KEGG" id="spo:2540111"/>
<dbReference type="PomBase" id="SPBC119.17">
    <property type="gene designation" value="cym1"/>
</dbReference>
<dbReference type="eggNOG" id="KOG2019">
    <property type="taxonomic scope" value="Eukaryota"/>
</dbReference>
<dbReference type="InParanoid" id="O42908"/>
<dbReference type="OMA" id="FPFQVHY"/>
<dbReference type="PhylomeDB" id="O42908"/>
<dbReference type="Reactome" id="R-SPO-1268020">
    <property type="pathway name" value="Mitochondrial protein import"/>
</dbReference>
<dbReference type="PRO" id="PR:O42908"/>
<dbReference type="Proteomes" id="UP000002485">
    <property type="component" value="Chromosome II"/>
</dbReference>
<dbReference type="GO" id="GO:0005758">
    <property type="term" value="C:mitochondrial intermembrane space"/>
    <property type="evidence" value="ECO:0000266"/>
    <property type="project" value="PomBase"/>
</dbReference>
<dbReference type="GO" id="GO:0005759">
    <property type="term" value="C:mitochondrial matrix"/>
    <property type="evidence" value="ECO:0000318"/>
    <property type="project" value="GO_Central"/>
</dbReference>
<dbReference type="GO" id="GO:0005739">
    <property type="term" value="C:mitochondrion"/>
    <property type="evidence" value="ECO:0007005"/>
    <property type="project" value="PomBase"/>
</dbReference>
<dbReference type="GO" id="GO:0004222">
    <property type="term" value="F:metalloendopeptidase activity"/>
    <property type="evidence" value="ECO:0000318"/>
    <property type="project" value="GO_Central"/>
</dbReference>
<dbReference type="GO" id="GO:0008270">
    <property type="term" value="F:zinc ion binding"/>
    <property type="evidence" value="ECO:0000250"/>
    <property type="project" value="UniProtKB"/>
</dbReference>
<dbReference type="GO" id="GO:0016485">
    <property type="term" value="P:protein processing"/>
    <property type="evidence" value="ECO:0000250"/>
    <property type="project" value="UniProtKB"/>
</dbReference>
<dbReference type="GO" id="GO:0006627">
    <property type="term" value="P:protein processing involved in protein targeting to mitochondrion"/>
    <property type="evidence" value="ECO:0000266"/>
    <property type="project" value="PomBase"/>
</dbReference>
<dbReference type="GO" id="GO:0051603">
    <property type="term" value="P:proteolysis involved in protein catabolic process"/>
    <property type="evidence" value="ECO:0000266"/>
    <property type="project" value="PomBase"/>
</dbReference>
<dbReference type="FunFam" id="3.30.830.10:FF:000013">
    <property type="entry name" value="Mitochondrial presequence protease"/>
    <property type="match status" value="1"/>
</dbReference>
<dbReference type="FunFam" id="3.30.830.10:FF:000009">
    <property type="entry name" value="Presequence protease, mitochondrial"/>
    <property type="match status" value="1"/>
</dbReference>
<dbReference type="FunFam" id="3.30.830.10:FF:000011">
    <property type="entry name" value="Presequence protease, mitochondrial"/>
    <property type="match status" value="1"/>
</dbReference>
<dbReference type="Gene3D" id="3.30.830.10">
    <property type="entry name" value="Metalloenzyme, LuxS/M16 peptidase-like"/>
    <property type="match status" value="4"/>
</dbReference>
<dbReference type="InterPro" id="IPR011249">
    <property type="entry name" value="Metalloenz_LuxS/M16"/>
</dbReference>
<dbReference type="InterPro" id="IPR011765">
    <property type="entry name" value="Pept_M16_N"/>
</dbReference>
<dbReference type="InterPro" id="IPR007863">
    <property type="entry name" value="Peptidase_M16_C"/>
</dbReference>
<dbReference type="InterPro" id="IPR013578">
    <property type="entry name" value="Peptidase_M16C_assoc"/>
</dbReference>
<dbReference type="InterPro" id="IPR055130">
    <property type="entry name" value="PreP_C"/>
</dbReference>
<dbReference type="PANTHER" id="PTHR43016">
    <property type="entry name" value="PRESEQUENCE PROTEASE"/>
    <property type="match status" value="1"/>
</dbReference>
<dbReference type="PANTHER" id="PTHR43016:SF13">
    <property type="entry name" value="PRESEQUENCE PROTEASE, MITOCHONDRIAL"/>
    <property type="match status" value="1"/>
</dbReference>
<dbReference type="Pfam" id="PF08367">
    <property type="entry name" value="M16C_assoc"/>
    <property type="match status" value="1"/>
</dbReference>
<dbReference type="Pfam" id="PF00675">
    <property type="entry name" value="Peptidase_M16"/>
    <property type="match status" value="1"/>
</dbReference>
<dbReference type="Pfam" id="PF05193">
    <property type="entry name" value="Peptidase_M16_C"/>
    <property type="match status" value="1"/>
</dbReference>
<dbReference type="Pfam" id="PF22516">
    <property type="entry name" value="PreP_C"/>
    <property type="match status" value="1"/>
</dbReference>
<dbReference type="SMART" id="SM01264">
    <property type="entry name" value="M16C_associated"/>
    <property type="match status" value="1"/>
</dbReference>
<dbReference type="SUPFAM" id="SSF63411">
    <property type="entry name" value="LuxS/MPP-like metallohydrolase"/>
    <property type="match status" value="4"/>
</dbReference>
<comment type="function">
    <text evidence="1 2">Degrades mitochondrial transit peptides after their cleavage in the intermembrane space or in the matrix, and presequence peptides; clearance of these peptides is required to keep the presequence processing machinery running (By similarity). Preferentially cleaves the N-terminal side of paired basic amino acid residues (By similarity). Also degrades other unstructured peptides (By similarity). May function as an ATP-dependent peptidase as opposed to a metalloendopeptidase (By similarity).</text>
</comment>
<comment type="cofactor">
    <cofactor evidence="3">
        <name>Zn(2+)</name>
        <dbReference type="ChEBI" id="CHEBI:29105"/>
    </cofactor>
    <text evidence="3">Binds 1 zinc ion per subunit.</text>
</comment>
<comment type="subunit">
    <text evidence="3">Monomer and homodimer; homodimerization is induced by binding of the substrate.</text>
</comment>
<comment type="subcellular location">
    <subcellularLocation>
        <location evidence="2">Mitochondrion intermembrane space</location>
    </subcellularLocation>
    <subcellularLocation>
        <location evidence="2">Mitochondrion matrix</location>
    </subcellularLocation>
</comment>
<comment type="similarity">
    <text evidence="6">Belongs to the peptidase M16 family. PreP subfamily.</text>
</comment>
<feature type="transit peptide" description="Mitochondrion" evidence="5">
    <location>
        <begin position="1"/>
        <end position="30"/>
    </location>
</feature>
<feature type="chain" id="PRO_0000178015" description="Presequence protease, mitochondrial">
    <location>
        <begin position="31"/>
        <end position="992"/>
    </location>
</feature>
<feature type="active site" description="Proton acceptor" evidence="3">
    <location>
        <position position="94"/>
    </location>
</feature>
<feature type="active site" evidence="4">
    <location>
        <position position="167"/>
    </location>
</feature>
<feature type="binding site" evidence="3">
    <location>
        <position position="91"/>
    </location>
    <ligand>
        <name>Zn(2+)</name>
        <dbReference type="ChEBI" id="CHEBI:29105"/>
        <note>catalytic</note>
    </ligand>
</feature>
<feature type="binding site" evidence="3">
    <location>
        <position position="95"/>
    </location>
    <ligand>
        <name>Zn(2+)</name>
        <dbReference type="ChEBI" id="CHEBI:29105"/>
        <note>catalytic</note>
    </ligand>
</feature>
<feature type="binding site" evidence="3">
    <location>
        <position position="192"/>
    </location>
    <ligand>
        <name>Zn(2+)</name>
        <dbReference type="ChEBI" id="CHEBI:29105"/>
        <note>catalytic</note>
    </ligand>
</feature>
<reference key="1">
    <citation type="journal article" date="2002" name="Nature">
        <title>The genome sequence of Schizosaccharomyces pombe.</title>
        <authorList>
            <person name="Wood V."/>
            <person name="Gwilliam R."/>
            <person name="Rajandream M.A."/>
            <person name="Lyne M.H."/>
            <person name="Lyne R."/>
            <person name="Stewart A."/>
            <person name="Sgouros J.G."/>
            <person name="Peat N."/>
            <person name="Hayles J."/>
            <person name="Baker S.G."/>
            <person name="Basham D."/>
            <person name="Bowman S."/>
            <person name="Brooks K."/>
            <person name="Brown D."/>
            <person name="Brown S."/>
            <person name="Chillingworth T."/>
            <person name="Churcher C.M."/>
            <person name="Collins M."/>
            <person name="Connor R."/>
            <person name="Cronin A."/>
            <person name="Davis P."/>
            <person name="Feltwell T."/>
            <person name="Fraser A."/>
            <person name="Gentles S."/>
            <person name="Goble A."/>
            <person name="Hamlin N."/>
            <person name="Harris D.E."/>
            <person name="Hidalgo J."/>
            <person name="Hodgson G."/>
            <person name="Holroyd S."/>
            <person name="Hornsby T."/>
            <person name="Howarth S."/>
            <person name="Huckle E.J."/>
            <person name="Hunt S."/>
            <person name="Jagels K."/>
            <person name="James K.D."/>
            <person name="Jones L."/>
            <person name="Jones M."/>
            <person name="Leather S."/>
            <person name="McDonald S."/>
            <person name="McLean J."/>
            <person name="Mooney P."/>
            <person name="Moule S."/>
            <person name="Mungall K.L."/>
            <person name="Murphy L.D."/>
            <person name="Niblett D."/>
            <person name="Odell C."/>
            <person name="Oliver K."/>
            <person name="O'Neil S."/>
            <person name="Pearson D."/>
            <person name="Quail M.A."/>
            <person name="Rabbinowitsch E."/>
            <person name="Rutherford K.M."/>
            <person name="Rutter S."/>
            <person name="Saunders D."/>
            <person name="Seeger K."/>
            <person name="Sharp S."/>
            <person name="Skelton J."/>
            <person name="Simmonds M.N."/>
            <person name="Squares R."/>
            <person name="Squares S."/>
            <person name="Stevens K."/>
            <person name="Taylor K."/>
            <person name="Taylor R.G."/>
            <person name="Tivey A."/>
            <person name="Walsh S.V."/>
            <person name="Warren T."/>
            <person name="Whitehead S."/>
            <person name="Woodward J.R."/>
            <person name="Volckaert G."/>
            <person name="Aert R."/>
            <person name="Robben J."/>
            <person name="Grymonprez B."/>
            <person name="Weltjens I."/>
            <person name="Vanstreels E."/>
            <person name="Rieger M."/>
            <person name="Schaefer M."/>
            <person name="Mueller-Auer S."/>
            <person name="Gabel C."/>
            <person name="Fuchs M."/>
            <person name="Duesterhoeft A."/>
            <person name="Fritzc C."/>
            <person name="Holzer E."/>
            <person name="Moestl D."/>
            <person name="Hilbert H."/>
            <person name="Borzym K."/>
            <person name="Langer I."/>
            <person name="Beck A."/>
            <person name="Lehrach H."/>
            <person name="Reinhardt R."/>
            <person name="Pohl T.M."/>
            <person name="Eger P."/>
            <person name="Zimmermann W."/>
            <person name="Wedler H."/>
            <person name="Wambutt R."/>
            <person name="Purnelle B."/>
            <person name="Goffeau A."/>
            <person name="Cadieu E."/>
            <person name="Dreano S."/>
            <person name="Gloux S."/>
            <person name="Lelaure V."/>
            <person name="Mottier S."/>
            <person name="Galibert F."/>
            <person name="Aves S.J."/>
            <person name="Xiang Z."/>
            <person name="Hunt C."/>
            <person name="Moore K."/>
            <person name="Hurst S.M."/>
            <person name="Lucas M."/>
            <person name="Rochet M."/>
            <person name="Gaillardin C."/>
            <person name="Tallada V.A."/>
            <person name="Garzon A."/>
            <person name="Thode G."/>
            <person name="Daga R.R."/>
            <person name="Cruzado L."/>
            <person name="Jimenez J."/>
            <person name="Sanchez M."/>
            <person name="del Rey F."/>
            <person name="Benito J."/>
            <person name="Dominguez A."/>
            <person name="Revuelta J.L."/>
            <person name="Moreno S."/>
            <person name="Armstrong J."/>
            <person name="Forsburg S.L."/>
            <person name="Cerutti L."/>
            <person name="Lowe T."/>
            <person name="McCombie W.R."/>
            <person name="Paulsen I."/>
            <person name="Potashkin J."/>
            <person name="Shpakovski G.V."/>
            <person name="Ussery D."/>
            <person name="Barrell B.G."/>
            <person name="Nurse P."/>
        </authorList>
    </citation>
    <scope>NUCLEOTIDE SEQUENCE [LARGE SCALE GENOMIC DNA]</scope>
    <source>
        <strain>972 / ATCC 24843</strain>
    </source>
</reference>
<accession>O42908</accession>